<gene>
    <name evidence="1" type="primary">moaA</name>
    <name type="ordered locus">CGSHiGG_02115</name>
</gene>
<feature type="chain" id="PRO_1000054194" description="GTP 3',8-cyclase">
    <location>
        <begin position="1"/>
        <end position="337"/>
    </location>
</feature>
<feature type="domain" description="Radical SAM core" evidence="2">
    <location>
        <begin position="17"/>
        <end position="243"/>
    </location>
</feature>
<feature type="binding site" evidence="1">
    <location>
        <position position="26"/>
    </location>
    <ligand>
        <name>GTP</name>
        <dbReference type="ChEBI" id="CHEBI:37565"/>
    </ligand>
</feature>
<feature type="binding site" evidence="1">
    <location>
        <position position="33"/>
    </location>
    <ligand>
        <name>[4Fe-4S] cluster</name>
        <dbReference type="ChEBI" id="CHEBI:49883"/>
        <label>1</label>
        <note>4Fe-4S-S-AdoMet</note>
    </ligand>
</feature>
<feature type="binding site" evidence="1">
    <location>
        <position position="37"/>
    </location>
    <ligand>
        <name>[4Fe-4S] cluster</name>
        <dbReference type="ChEBI" id="CHEBI:49883"/>
        <label>1</label>
        <note>4Fe-4S-S-AdoMet</note>
    </ligand>
</feature>
<feature type="binding site" evidence="1">
    <location>
        <position position="39"/>
    </location>
    <ligand>
        <name>S-adenosyl-L-methionine</name>
        <dbReference type="ChEBI" id="CHEBI:59789"/>
    </ligand>
</feature>
<feature type="binding site" evidence="1">
    <location>
        <position position="40"/>
    </location>
    <ligand>
        <name>[4Fe-4S] cluster</name>
        <dbReference type="ChEBI" id="CHEBI:49883"/>
        <label>1</label>
        <note>4Fe-4S-S-AdoMet</note>
    </ligand>
</feature>
<feature type="binding site" evidence="1">
    <location>
        <position position="76"/>
    </location>
    <ligand>
        <name>GTP</name>
        <dbReference type="ChEBI" id="CHEBI:37565"/>
    </ligand>
</feature>
<feature type="binding site" evidence="1">
    <location>
        <position position="80"/>
    </location>
    <ligand>
        <name>S-adenosyl-L-methionine</name>
        <dbReference type="ChEBI" id="CHEBI:59789"/>
    </ligand>
</feature>
<feature type="binding site" evidence="1">
    <location>
        <position position="107"/>
    </location>
    <ligand>
        <name>GTP</name>
        <dbReference type="ChEBI" id="CHEBI:37565"/>
    </ligand>
</feature>
<feature type="binding site" evidence="1">
    <location>
        <position position="131"/>
    </location>
    <ligand>
        <name>S-adenosyl-L-methionine</name>
        <dbReference type="ChEBI" id="CHEBI:59789"/>
    </ligand>
</feature>
<feature type="binding site" evidence="1">
    <location>
        <position position="168"/>
    </location>
    <ligand>
        <name>GTP</name>
        <dbReference type="ChEBI" id="CHEBI:37565"/>
    </ligand>
</feature>
<feature type="binding site" evidence="1">
    <location>
        <position position="202"/>
    </location>
    <ligand>
        <name>S-adenosyl-L-methionine</name>
        <dbReference type="ChEBI" id="CHEBI:59789"/>
    </ligand>
</feature>
<feature type="binding site" evidence="1">
    <location>
        <position position="265"/>
    </location>
    <ligand>
        <name>[4Fe-4S] cluster</name>
        <dbReference type="ChEBI" id="CHEBI:49883"/>
        <label>2</label>
        <note>4Fe-4S-substrate</note>
    </ligand>
</feature>
<feature type="binding site" evidence="1">
    <location>
        <position position="268"/>
    </location>
    <ligand>
        <name>[4Fe-4S] cluster</name>
        <dbReference type="ChEBI" id="CHEBI:49883"/>
        <label>2</label>
        <note>4Fe-4S-substrate</note>
    </ligand>
</feature>
<feature type="binding site" evidence="1">
    <location>
        <begin position="270"/>
        <end position="272"/>
    </location>
    <ligand>
        <name>GTP</name>
        <dbReference type="ChEBI" id="CHEBI:37565"/>
    </ligand>
</feature>
<feature type="binding site" evidence="1">
    <location>
        <position position="282"/>
    </location>
    <ligand>
        <name>[4Fe-4S] cluster</name>
        <dbReference type="ChEBI" id="CHEBI:49883"/>
        <label>2</label>
        <note>4Fe-4S-substrate</note>
    </ligand>
</feature>
<sequence length="337" mass="38325">MQSIPIKNVGESRLVDPFQRQYYYLRLSITDQCNFRCTYCLPDGYQPEANKPSFLTLKEITHLAQAFAEMGTEKIRLTGGEPTLRKDFISIAESITNIDGIRQLAVTTNGYRMAKDVADWKQAGITSINVSVDSLDPKMFHQITGINKFDDVMRGIDRAFEVGYNKVKVNSVLMKNLNDKEFEQFLAWVKDRPIQMRFIELMQTGEMDSFFDKFHLSGQVLADKLLKNGWTLQHKSHTDGPAKVFTHSDYTGEIGLIMPYEKNFCASCNRLRVSAKGKLHLCLFGEEGIELRDLLQSHEQQGILQARIFAALQGKREHHYLHIGDTGVRNHLASIGG</sequence>
<protein>
    <recommendedName>
        <fullName evidence="1">GTP 3',8-cyclase</fullName>
        <ecNumber evidence="1">4.1.99.22</ecNumber>
    </recommendedName>
    <alternativeName>
        <fullName evidence="1">Molybdenum cofactor biosynthesis protein A</fullName>
    </alternativeName>
</protein>
<reference key="1">
    <citation type="journal article" date="2007" name="Genome Biol.">
        <title>Characterization and modeling of the Haemophilus influenzae core and supragenomes based on the complete genomic sequences of Rd and 12 clinical nontypeable strains.</title>
        <authorList>
            <person name="Hogg J.S."/>
            <person name="Hu F.Z."/>
            <person name="Janto B."/>
            <person name="Boissy R."/>
            <person name="Hayes J."/>
            <person name="Keefe R."/>
            <person name="Post J.C."/>
            <person name="Ehrlich G.D."/>
        </authorList>
    </citation>
    <scope>NUCLEOTIDE SEQUENCE [LARGE SCALE GENOMIC DNA]</scope>
    <source>
        <strain>PittGG</strain>
    </source>
</reference>
<accession>A5UFB4</accession>
<evidence type="ECO:0000255" key="1">
    <source>
        <dbReference type="HAMAP-Rule" id="MF_01225"/>
    </source>
</evidence>
<evidence type="ECO:0000255" key="2">
    <source>
        <dbReference type="PROSITE-ProRule" id="PRU01266"/>
    </source>
</evidence>
<dbReference type="EC" id="4.1.99.22" evidence="1"/>
<dbReference type="EMBL" id="CP000672">
    <property type="protein sequence ID" value="ABQ99469.1"/>
    <property type="molecule type" value="Genomic_DNA"/>
</dbReference>
<dbReference type="SMR" id="A5UFB4"/>
<dbReference type="KEGG" id="hiq:CGSHiGG_02115"/>
<dbReference type="HOGENOM" id="CLU_009273_0_1_6"/>
<dbReference type="UniPathway" id="UPA00344"/>
<dbReference type="Proteomes" id="UP000001990">
    <property type="component" value="Chromosome"/>
</dbReference>
<dbReference type="GO" id="GO:0051539">
    <property type="term" value="F:4 iron, 4 sulfur cluster binding"/>
    <property type="evidence" value="ECO:0007669"/>
    <property type="project" value="UniProtKB-UniRule"/>
</dbReference>
<dbReference type="GO" id="GO:0061799">
    <property type="term" value="F:cyclic pyranopterin monophosphate synthase activity"/>
    <property type="evidence" value="ECO:0007669"/>
    <property type="project" value="TreeGrafter"/>
</dbReference>
<dbReference type="GO" id="GO:0061798">
    <property type="term" value="F:GTP 3',8'-cyclase activity"/>
    <property type="evidence" value="ECO:0007669"/>
    <property type="project" value="UniProtKB-UniRule"/>
</dbReference>
<dbReference type="GO" id="GO:0005525">
    <property type="term" value="F:GTP binding"/>
    <property type="evidence" value="ECO:0007669"/>
    <property type="project" value="UniProtKB-UniRule"/>
</dbReference>
<dbReference type="GO" id="GO:0046872">
    <property type="term" value="F:metal ion binding"/>
    <property type="evidence" value="ECO:0007669"/>
    <property type="project" value="UniProtKB-KW"/>
</dbReference>
<dbReference type="GO" id="GO:1904047">
    <property type="term" value="F:S-adenosyl-L-methionine binding"/>
    <property type="evidence" value="ECO:0007669"/>
    <property type="project" value="UniProtKB-UniRule"/>
</dbReference>
<dbReference type="GO" id="GO:0006777">
    <property type="term" value="P:Mo-molybdopterin cofactor biosynthetic process"/>
    <property type="evidence" value="ECO:0007669"/>
    <property type="project" value="UniProtKB-UniRule"/>
</dbReference>
<dbReference type="CDD" id="cd01335">
    <property type="entry name" value="Radical_SAM"/>
    <property type="match status" value="1"/>
</dbReference>
<dbReference type="CDD" id="cd21117">
    <property type="entry name" value="Twitch_MoaA"/>
    <property type="match status" value="1"/>
</dbReference>
<dbReference type="FunFam" id="3.20.20.70:FF:000057">
    <property type="entry name" value="GTP 3',8-cyclase"/>
    <property type="match status" value="1"/>
</dbReference>
<dbReference type="Gene3D" id="3.20.20.70">
    <property type="entry name" value="Aldolase class I"/>
    <property type="match status" value="1"/>
</dbReference>
<dbReference type="HAMAP" id="MF_01225_B">
    <property type="entry name" value="MoaA_B"/>
    <property type="match status" value="1"/>
</dbReference>
<dbReference type="InterPro" id="IPR013785">
    <property type="entry name" value="Aldolase_TIM"/>
</dbReference>
<dbReference type="InterPro" id="IPR006638">
    <property type="entry name" value="Elp3/MiaA/NifB-like_rSAM"/>
</dbReference>
<dbReference type="InterPro" id="IPR013483">
    <property type="entry name" value="MoaA"/>
</dbReference>
<dbReference type="InterPro" id="IPR000385">
    <property type="entry name" value="MoaA_NifB_PqqE_Fe-S-bd_CS"/>
</dbReference>
<dbReference type="InterPro" id="IPR010505">
    <property type="entry name" value="MoaA_twitch"/>
</dbReference>
<dbReference type="InterPro" id="IPR050105">
    <property type="entry name" value="MoCo_biosynth_MoaA/MoaC"/>
</dbReference>
<dbReference type="InterPro" id="IPR007197">
    <property type="entry name" value="rSAM"/>
</dbReference>
<dbReference type="NCBIfam" id="TIGR02666">
    <property type="entry name" value="moaA"/>
    <property type="match status" value="1"/>
</dbReference>
<dbReference type="PANTHER" id="PTHR22960:SF28">
    <property type="entry name" value="GTP 3',8-CYCLASE"/>
    <property type="match status" value="1"/>
</dbReference>
<dbReference type="PANTHER" id="PTHR22960">
    <property type="entry name" value="MOLYBDOPTERIN COFACTOR SYNTHESIS PROTEIN A"/>
    <property type="match status" value="1"/>
</dbReference>
<dbReference type="Pfam" id="PF13353">
    <property type="entry name" value="Fer4_12"/>
    <property type="match status" value="1"/>
</dbReference>
<dbReference type="Pfam" id="PF06463">
    <property type="entry name" value="Mob_synth_C"/>
    <property type="match status" value="1"/>
</dbReference>
<dbReference type="Pfam" id="PF04055">
    <property type="entry name" value="Radical_SAM"/>
    <property type="match status" value="1"/>
</dbReference>
<dbReference type="SFLD" id="SFLDG01383">
    <property type="entry name" value="cyclic_pyranopterin_phosphate"/>
    <property type="match status" value="1"/>
</dbReference>
<dbReference type="SFLD" id="SFLDG01386">
    <property type="entry name" value="main_SPASM_domain-containing"/>
    <property type="match status" value="1"/>
</dbReference>
<dbReference type="SMART" id="SM00729">
    <property type="entry name" value="Elp3"/>
    <property type="match status" value="1"/>
</dbReference>
<dbReference type="SUPFAM" id="SSF102114">
    <property type="entry name" value="Radical SAM enzymes"/>
    <property type="match status" value="1"/>
</dbReference>
<dbReference type="PROSITE" id="PS01305">
    <property type="entry name" value="MOAA_NIFB_PQQE"/>
    <property type="match status" value="1"/>
</dbReference>
<dbReference type="PROSITE" id="PS51918">
    <property type="entry name" value="RADICAL_SAM"/>
    <property type="match status" value="1"/>
</dbReference>
<keyword id="KW-0004">4Fe-4S</keyword>
<keyword id="KW-0342">GTP-binding</keyword>
<keyword id="KW-0408">Iron</keyword>
<keyword id="KW-0411">Iron-sulfur</keyword>
<keyword id="KW-0456">Lyase</keyword>
<keyword id="KW-0479">Metal-binding</keyword>
<keyword id="KW-0501">Molybdenum cofactor biosynthesis</keyword>
<keyword id="KW-0547">Nucleotide-binding</keyword>
<keyword id="KW-0949">S-adenosyl-L-methionine</keyword>
<proteinExistence type="inferred from homology"/>
<comment type="function">
    <text evidence="1">Catalyzes the cyclization of GTP to (8S)-3',8-cyclo-7,8-dihydroguanosine 5'-triphosphate.</text>
</comment>
<comment type="catalytic activity">
    <reaction evidence="1">
        <text>GTP + AH2 + S-adenosyl-L-methionine = (8S)-3',8-cyclo-7,8-dihydroguanosine 5'-triphosphate + 5'-deoxyadenosine + L-methionine + A + H(+)</text>
        <dbReference type="Rhea" id="RHEA:49576"/>
        <dbReference type="ChEBI" id="CHEBI:13193"/>
        <dbReference type="ChEBI" id="CHEBI:15378"/>
        <dbReference type="ChEBI" id="CHEBI:17319"/>
        <dbReference type="ChEBI" id="CHEBI:17499"/>
        <dbReference type="ChEBI" id="CHEBI:37565"/>
        <dbReference type="ChEBI" id="CHEBI:57844"/>
        <dbReference type="ChEBI" id="CHEBI:59789"/>
        <dbReference type="ChEBI" id="CHEBI:131766"/>
        <dbReference type="EC" id="4.1.99.22"/>
    </reaction>
</comment>
<comment type="cofactor">
    <cofactor evidence="1">
        <name>[4Fe-4S] cluster</name>
        <dbReference type="ChEBI" id="CHEBI:49883"/>
    </cofactor>
    <text evidence="1">Binds 2 [4Fe-4S] clusters. Binds 1 [4Fe-4S] cluster coordinated with 3 cysteines and an exchangeable S-adenosyl-L-methionine and 1 [4Fe-4S] cluster coordinated with 3 cysteines and the GTP-derived substrate.</text>
</comment>
<comment type="pathway">
    <text evidence="1">Cofactor biosynthesis; molybdopterin biosynthesis.</text>
</comment>
<comment type="subunit">
    <text evidence="1">Monomer and homodimer.</text>
</comment>
<comment type="similarity">
    <text evidence="1">Belongs to the radical SAM superfamily. MoaA family.</text>
</comment>
<name>MOAA_HAEIG</name>
<organism>
    <name type="scientific">Haemophilus influenzae (strain PittGG)</name>
    <dbReference type="NCBI Taxonomy" id="374931"/>
    <lineage>
        <taxon>Bacteria</taxon>
        <taxon>Pseudomonadati</taxon>
        <taxon>Pseudomonadota</taxon>
        <taxon>Gammaproteobacteria</taxon>
        <taxon>Pasteurellales</taxon>
        <taxon>Pasteurellaceae</taxon>
        <taxon>Haemophilus</taxon>
    </lineage>
</organism>